<proteinExistence type="evidence at protein level"/>
<feature type="chain" id="PRO_0000219383" description="Fascin-3">
    <location>
        <begin position="1"/>
        <end position="498"/>
    </location>
</feature>
<feature type="splice variant" id="VSP_057001" description="In isoform 2." evidence="2">
    <location>
        <begin position="1"/>
        <end position="134"/>
    </location>
</feature>
<feature type="splice variant" id="VSP_057002" description="In isoform 2." evidence="2">
    <original>AQGGSFWSITSFGTFRPWGKFALNFCIELQGSNLLTVLAPNGFYMRADQSGTLLA</original>
    <variation>GGILLVNNILWHLSPLGQVCPQLLYRASGEQLTHCTGPQWLLHASRPKWHPVGRQ</variation>
    <location>
        <begin position="431"/>
        <end position="485"/>
    </location>
</feature>
<feature type="splice variant" id="VSP_057003" description="In isoform 2.">
    <location>
        <begin position="486"/>
        <end position="498"/>
    </location>
</feature>
<feature type="sequence variant" id="VAR_022021" description="In dbSNP:rs3779536.">
    <original>A</original>
    <variation>S</variation>
    <location>
        <position position="24"/>
    </location>
</feature>
<feature type="sequence variant" id="VAR_033939" description="In dbSNP:rs34394613.">
    <original>H</original>
    <variation>L</variation>
    <location>
        <position position="428"/>
    </location>
</feature>
<name>FSCN3_HUMAN</name>
<accession>Q9NQT6</accession>
<accession>A4D0Z2</accession>
<accession>A6NLL7</accession>
<accession>B2RA62</accession>
<accession>B4DU68</accession>
<evidence type="ECO:0000250" key="1"/>
<evidence type="ECO:0000303" key="2">
    <source>
    </source>
</evidence>
<evidence type="ECO:0000305" key="3"/>
<dbReference type="EMBL" id="AF281049">
    <property type="protein sequence ID" value="AAF91439.1"/>
    <property type="molecule type" value="mRNA"/>
</dbReference>
<dbReference type="EMBL" id="AK300518">
    <property type="protein sequence ID" value="BAG62230.1"/>
    <property type="molecule type" value="mRNA"/>
</dbReference>
<dbReference type="EMBL" id="AK314050">
    <property type="protein sequence ID" value="BAG36759.1"/>
    <property type="molecule type" value="mRNA"/>
</dbReference>
<dbReference type="EMBL" id="AC000357">
    <property type="status" value="NOT_ANNOTATED_CDS"/>
    <property type="molecule type" value="Genomic_DNA"/>
</dbReference>
<dbReference type="EMBL" id="AC073934">
    <property type="status" value="NOT_ANNOTATED_CDS"/>
    <property type="molecule type" value="Genomic_DNA"/>
</dbReference>
<dbReference type="EMBL" id="CH236947">
    <property type="protein sequence ID" value="EAL24319.1"/>
    <property type="molecule type" value="Genomic_DNA"/>
</dbReference>
<dbReference type="EMBL" id="CH471070">
    <property type="protein sequence ID" value="EAW83632.1"/>
    <property type="molecule type" value="Genomic_DNA"/>
</dbReference>
<dbReference type="EMBL" id="BC035606">
    <property type="protein sequence ID" value="AAH35606.1"/>
    <property type="molecule type" value="mRNA"/>
</dbReference>
<dbReference type="CCDS" id="CCDS34746.1">
    <molecule id="Q9NQT6-1"/>
</dbReference>
<dbReference type="RefSeq" id="NP_065102.1">
    <molecule id="Q9NQT6-1"/>
    <property type="nucleotide sequence ID" value="NM_020369.3"/>
</dbReference>
<dbReference type="EMDB" id="EMD-43370"/>
<dbReference type="EMDB" id="EMD-43371"/>
<dbReference type="EMDB" id="EMD-43372"/>
<dbReference type="SMR" id="Q9NQT6"/>
<dbReference type="BioGRID" id="119023">
    <property type="interactions" value="17"/>
</dbReference>
<dbReference type="FunCoup" id="Q9NQT6">
    <property type="interactions" value="4"/>
</dbReference>
<dbReference type="IntAct" id="Q9NQT6">
    <property type="interactions" value="4"/>
</dbReference>
<dbReference type="STRING" id="9606.ENSP00000265825"/>
<dbReference type="iPTMnet" id="Q9NQT6"/>
<dbReference type="PhosphoSitePlus" id="Q9NQT6"/>
<dbReference type="BioMuta" id="FSCN3"/>
<dbReference type="DMDM" id="18203315"/>
<dbReference type="MassIVE" id="Q9NQT6"/>
<dbReference type="PaxDb" id="9606-ENSP00000265825"/>
<dbReference type="PeptideAtlas" id="Q9NQT6"/>
<dbReference type="ProteomicsDB" id="5155"/>
<dbReference type="ProteomicsDB" id="82186">
    <molecule id="Q9NQT6-1"/>
</dbReference>
<dbReference type="Antibodypedia" id="45993">
    <property type="antibodies" value="151 antibodies from 22 providers"/>
</dbReference>
<dbReference type="DNASU" id="29999"/>
<dbReference type="Ensembl" id="ENST00000265825.6">
    <molecule id="Q9NQT6-1"/>
    <property type="protein sequence ID" value="ENSP00000265825.5"/>
    <property type="gene ID" value="ENSG00000106328.10"/>
</dbReference>
<dbReference type="GeneID" id="29999"/>
<dbReference type="KEGG" id="hsa:29999"/>
<dbReference type="MANE-Select" id="ENST00000265825.6">
    <property type="protein sequence ID" value="ENSP00000265825.5"/>
    <property type="RefSeq nucleotide sequence ID" value="NM_020369.3"/>
    <property type="RefSeq protein sequence ID" value="NP_065102.1"/>
</dbReference>
<dbReference type="UCSC" id="uc003vmd.3">
    <molecule id="Q9NQT6-1"/>
    <property type="organism name" value="human"/>
</dbReference>
<dbReference type="AGR" id="HGNC:3961"/>
<dbReference type="CTD" id="29999"/>
<dbReference type="DisGeNET" id="29999"/>
<dbReference type="GeneCards" id="FSCN3"/>
<dbReference type="HGNC" id="HGNC:3961">
    <property type="gene designation" value="FSCN3"/>
</dbReference>
<dbReference type="HPA" id="ENSG00000106328">
    <property type="expression patterns" value="Tissue enriched (testis)"/>
</dbReference>
<dbReference type="MIM" id="615800">
    <property type="type" value="gene"/>
</dbReference>
<dbReference type="neXtProt" id="NX_Q9NQT6"/>
<dbReference type="OpenTargets" id="ENSG00000106328"/>
<dbReference type="PharmGKB" id="PA28379"/>
<dbReference type="VEuPathDB" id="HostDB:ENSG00000106328"/>
<dbReference type="eggNOG" id="ENOG502QSD9">
    <property type="taxonomic scope" value="Eukaryota"/>
</dbReference>
<dbReference type="GeneTree" id="ENSGT00950000183157"/>
<dbReference type="HOGENOM" id="CLU_030960_2_0_1"/>
<dbReference type="InParanoid" id="Q9NQT6"/>
<dbReference type="OMA" id="MADGHPM"/>
<dbReference type="OrthoDB" id="10259868at2759"/>
<dbReference type="PAN-GO" id="Q9NQT6">
    <property type="GO annotations" value="12 GO annotations based on evolutionary models"/>
</dbReference>
<dbReference type="PhylomeDB" id="Q9NQT6"/>
<dbReference type="TreeFam" id="TF323992"/>
<dbReference type="PathwayCommons" id="Q9NQT6"/>
<dbReference type="SignaLink" id="Q9NQT6"/>
<dbReference type="BioGRID-ORCS" id="29999">
    <property type="hits" value="8 hits in 1145 CRISPR screens"/>
</dbReference>
<dbReference type="GeneWiki" id="FSCN3"/>
<dbReference type="GenomeRNAi" id="29999"/>
<dbReference type="Pharos" id="Q9NQT6">
    <property type="development level" value="Tdark"/>
</dbReference>
<dbReference type="PRO" id="PR:Q9NQT6"/>
<dbReference type="Proteomes" id="UP000005640">
    <property type="component" value="Chromosome 7"/>
</dbReference>
<dbReference type="RNAct" id="Q9NQT6">
    <property type="molecule type" value="protein"/>
</dbReference>
<dbReference type="Bgee" id="ENSG00000106328">
    <property type="expression patterns" value="Expressed in sperm and 112 other cell types or tissues"/>
</dbReference>
<dbReference type="ExpressionAtlas" id="Q9NQT6">
    <property type="expression patterns" value="baseline and differential"/>
</dbReference>
<dbReference type="GO" id="GO:0015629">
    <property type="term" value="C:actin cytoskeleton"/>
    <property type="evidence" value="ECO:0000250"/>
    <property type="project" value="UniProtKB"/>
</dbReference>
<dbReference type="GO" id="GO:0031253">
    <property type="term" value="C:cell projection membrane"/>
    <property type="evidence" value="ECO:0000318"/>
    <property type="project" value="GO_Central"/>
</dbReference>
<dbReference type="GO" id="GO:0005737">
    <property type="term" value="C:cytoplasm"/>
    <property type="evidence" value="ECO:0000318"/>
    <property type="project" value="GO_Central"/>
</dbReference>
<dbReference type="GO" id="GO:0005856">
    <property type="term" value="C:cytoskeleton"/>
    <property type="evidence" value="ECO:0000304"/>
    <property type="project" value="ProtInc"/>
</dbReference>
<dbReference type="GO" id="GO:0030175">
    <property type="term" value="C:filopodium"/>
    <property type="evidence" value="ECO:0000318"/>
    <property type="project" value="GO_Central"/>
</dbReference>
<dbReference type="GO" id="GO:0030426">
    <property type="term" value="C:growth cone"/>
    <property type="evidence" value="ECO:0000318"/>
    <property type="project" value="GO_Central"/>
</dbReference>
<dbReference type="GO" id="GO:0030027">
    <property type="term" value="C:lamellipodium"/>
    <property type="evidence" value="ECO:0000318"/>
    <property type="project" value="GO_Central"/>
</dbReference>
<dbReference type="GO" id="GO:0005902">
    <property type="term" value="C:microvillus"/>
    <property type="evidence" value="ECO:0000318"/>
    <property type="project" value="GO_Central"/>
</dbReference>
<dbReference type="GO" id="GO:0001726">
    <property type="term" value="C:ruffle"/>
    <property type="evidence" value="ECO:0000318"/>
    <property type="project" value="GO_Central"/>
</dbReference>
<dbReference type="GO" id="GO:0051015">
    <property type="term" value="F:actin filament binding"/>
    <property type="evidence" value="ECO:0000318"/>
    <property type="project" value="GO_Central"/>
</dbReference>
<dbReference type="GO" id="GO:0030674">
    <property type="term" value="F:protein-macromolecule adaptor activity"/>
    <property type="evidence" value="ECO:0007669"/>
    <property type="project" value="InterPro"/>
</dbReference>
<dbReference type="GO" id="GO:0051017">
    <property type="term" value="P:actin filament bundle assembly"/>
    <property type="evidence" value="ECO:0000318"/>
    <property type="project" value="GO_Central"/>
</dbReference>
<dbReference type="GO" id="GO:0016477">
    <property type="term" value="P:cell migration"/>
    <property type="evidence" value="ECO:0000318"/>
    <property type="project" value="GO_Central"/>
</dbReference>
<dbReference type="GO" id="GO:0007163">
    <property type="term" value="P:establishment or maintenance of cell polarity"/>
    <property type="evidence" value="ECO:0000318"/>
    <property type="project" value="GO_Central"/>
</dbReference>
<dbReference type="CDD" id="cd23346">
    <property type="entry name" value="beta-trefoil_FSCN3_rpt1"/>
    <property type="match status" value="1"/>
</dbReference>
<dbReference type="CDD" id="cd23350">
    <property type="entry name" value="beta-trefoil_FSCN3_rpt2"/>
    <property type="match status" value="1"/>
</dbReference>
<dbReference type="CDD" id="cd23354">
    <property type="entry name" value="beta-trefoil_FSCN3_rpt3"/>
    <property type="match status" value="1"/>
</dbReference>
<dbReference type="CDD" id="cd23358">
    <property type="entry name" value="beta-trefoil_FSCN3_rpt4"/>
    <property type="match status" value="1"/>
</dbReference>
<dbReference type="FunFam" id="2.80.10.50:FF:000045">
    <property type="entry name" value="Fascin"/>
    <property type="match status" value="1"/>
</dbReference>
<dbReference type="FunFam" id="2.80.10.50:FF:000050">
    <property type="entry name" value="Fascin"/>
    <property type="match status" value="1"/>
</dbReference>
<dbReference type="FunFam" id="2.80.10.50:FF:000051">
    <property type="entry name" value="Fascin"/>
    <property type="match status" value="1"/>
</dbReference>
<dbReference type="FunFam" id="2.80.10.50:FF:000055">
    <property type="entry name" value="Fascin"/>
    <property type="match status" value="1"/>
</dbReference>
<dbReference type="Gene3D" id="2.80.10.50">
    <property type="match status" value="4"/>
</dbReference>
<dbReference type="InterPro" id="IPR008999">
    <property type="entry name" value="Actin-crosslinking"/>
</dbReference>
<dbReference type="InterPro" id="IPR010431">
    <property type="entry name" value="Fascin"/>
</dbReference>
<dbReference type="InterPro" id="IPR022768">
    <property type="entry name" value="Fascin-like_dom"/>
</dbReference>
<dbReference type="InterPro" id="IPR024703">
    <property type="entry name" value="Fascin_metazoans"/>
</dbReference>
<dbReference type="PANTHER" id="PTHR10551">
    <property type="entry name" value="FASCIN"/>
    <property type="match status" value="1"/>
</dbReference>
<dbReference type="PANTHER" id="PTHR10551:SF1">
    <property type="entry name" value="FASCIN-3"/>
    <property type="match status" value="1"/>
</dbReference>
<dbReference type="Pfam" id="PF06268">
    <property type="entry name" value="Fascin"/>
    <property type="match status" value="2"/>
</dbReference>
<dbReference type="PIRSF" id="PIRSF005682">
    <property type="entry name" value="Fascin"/>
    <property type="match status" value="1"/>
</dbReference>
<dbReference type="SUPFAM" id="SSF50405">
    <property type="entry name" value="Actin-crosslinking proteins"/>
    <property type="match status" value="4"/>
</dbReference>
<protein>
    <recommendedName>
        <fullName>Fascin-3</fullName>
    </recommendedName>
    <alternativeName>
        <fullName>Testis fascin</fullName>
    </alternativeName>
</protein>
<keyword id="KW-0009">Actin-binding</keyword>
<keyword id="KW-0025">Alternative splicing</keyword>
<keyword id="KW-0963">Cytoplasm</keyword>
<keyword id="KW-0206">Cytoskeleton</keyword>
<keyword id="KW-1267">Proteomics identification</keyword>
<keyword id="KW-1185">Reference proteome</keyword>
<gene>
    <name type="primary">FSCN3</name>
</gene>
<sequence>MDETEWIHRHPKAEDLRVGLISWAGTYLTFEACKNTVTATAKSLGRRQTWEILVSNEHETQAVVRLKSVQGLYLLCECDGTVCYGRPRTSHHGCFLLRFHRNSKWTLQCLISGRYLESNGKDVFCTSHVLSAYHMWTPRPALHVHVILYSPIHRCYARADPTMGRIWVDAAVPCLEECGFLLHFRDGCYHLETSTHHFLSHVDRLFSQPSSQTAFHMQVRPGGLVALCDGEGGMLYPQGTHLLLGMGCNPMRGEEWFILQHCPTWVSLRSKTGRFISVIYDGEVRAASERLNRMSLFQFECDSESPTVQLRSANGYYLSQRRHRAVMADGHPLESDTFFRMHWNCGRIILQSCRGRFLGIAPNSLLMANVILPGPNEEFGILFANRSFLVLRGRYGYVGSSSGHDLIQCNQDQPDRIHLLPCRPGIYHFQAQGGSFWSITSFGTFRPWGKFALNFCIELQGSNLLTVLAPNGFYMRADQSGTLLADSEDITRECIWEF</sequence>
<comment type="function">
    <text evidence="1">Acts as an actin bundling protein.</text>
</comment>
<comment type="subcellular location">
    <subcellularLocation>
        <location evidence="1">Cytoplasm</location>
        <location evidence="1">Cytoskeleton</location>
    </subcellularLocation>
</comment>
<comment type="alternative products">
    <event type="alternative splicing"/>
    <isoform>
        <id>Q9NQT6-1</id>
        <name>1</name>
        <sequence type="displayed"/>
    </isoform>
    <isoform>
        <id>Q9NQT6-2</id>
        <name>2</name>
        <sequence type="described" ref="VSP_057001 VSP_057002 VSP_057003"/>
    </isoform>
</comment>
<comment type="tissue specificity">
    <text>Expressed in testis.</text>
</comment>
<comment type="similarity">
    <text evidence="3">Belongs to the fascin family.</text>
</comment>
<reference key="1">
    <citation type="journal article" date="2002" name="Exp. Cell Res.">
        <title>Testis fascin (FSCN3): a novel paralog of the actin-bundling protein fascin expressed specifically in the elongate spermatid head.</title>
        <authorList>
            <person name="Tubb B."/>
            <person name="Mulholland D.J."/>
            <person name="Vogl W."/>
            <person name="Lan Z.J."/>
            <person name="Niederberger C."/>
            <person name="Cooney A."/>
            <person name="Bryan J."/>
        </authorList>
    </citation>
    <scope>NUCLEOTIDE SEQUENCE [MRNA] (ISOFORM 1)</scope>
    <source>
        <tissue>Testis</tissue>
    </source>
</reference>
<reference key="2">
    <citation type="journal article" date="2004" name="Nat. Genet.">
        <title>Complete sequencing and characterization of 21,243 full-length human cDNAs.</title>
        <authorList>
            <person name="Ota T."/>
            <person name="Suzuki Y."/>
            <person name="Nishikawa T."/>
            <person name="Otsuki T."/>
            <person name="Sugiyama T."/>
            <person name="Irie R."/>
            <person name="Wakamatsu A."/>
            <person name="Hayashi K."/>
            <person name="Sato H."/>
            <person name="Nagai K."/>
            <person name="Kimura K."/>
            <person name="Makita H."/>
            <person name="Sekine M."/>
            <person name="Obayashi M."/>
            <person name="Nishi T."/>
            <person name="Shibahara T."/>
            <person name="Tanaka T."/>
            <person name="Ishii S."/>
            <person name="Yamamoto J."/>
            <person name="Saito K."/>
            <person name="Kawai Y."/>
            <person name="Isono Y."/>
            <person name="Nakamura Y."/>
            <person name="Nagahari K."/>
            <person name="Murakami K."/>
            <person name="Yasuda T."/>
            <person name="Iwayanagi T."/>
            <person name="Wagatsuma M."/>
            <person name="Shiratori A."/>
            <person name="Sudo H."/>
            <person name="Hosoiri T."/>
            <person name="Kaku Y."/>
            <person name="Kodaira H."/>
            <person name="Kondo H."/>
            <person name="Sugawara M."/>
            <person name="Takahashi M."/>
            <person name="Kanda K."/>
            <person name="Yokoi T."/>
            <person name="Furuya T."/>
            <person name="Kikkawa E."/>
            <person name="Omura Y."/>
            <person name="Abe K."/>
            <person name="Kamihara K."/>
            <person name="Katsuta N."/>
            <person name="Sato K."/>
            <person name="Tanikawa M."/>
            <person name="Yamazaki M."/>
            <person name="Ninomiya K."/>
            <person name="Ishibashi T."/>
            <person name="Yamashita H."/>
            <person name="Murakawa K."/>
            <person name="Fujimori K."/>
            <person name="Tanai H."/>
            <person name="Kimata M."/>
            <person name="Watanabe M."/>
            <person name="Hiraoka S."/>
            <person name="Chiba Y."/>
            <person name="Ishida S."/>
            <person name="Ono Y."/>
            <person name="Takiguchi S."/>
            <person name="Watanabe S."/>
            <person name="Yosida M."/>
            <person name="Hotuta T."/>
            <person name="Kusano J."/>
            <person name="Kanehori K."/>
            <person name="Takahashi-Fujii A."/>
            <person name="Hara H."/>
            <person name="Tanase T.-O."/>
            <person name="Nomura Y."/>
            <person name="Togiya S."/>
            <person name="Komai F."/>
            <person name="Hara R."/>
            <person name="Takeuchi K."/>
            <person name="Arita M."/>
            <person name="Imose N."/>
            <person name="Musashino K."/>
            <person name="Yuuki H."/>
            <person name="Oshima A."/>
            <person name="Sasaki N."/>
            <person name="Aotsuka S."/>
            <person name="Yoshikawa Y."/>
            <person name="Matsunawa H."/>
            <person name="Ichihara T."/>
            <person name="Shiohata N."/>
            <person name="Sano S."/>
            <person name="Moriya S."/>
            <person name="Momiyama H."/>
            <person name="Satoh N."/>
            <person name="Takami S."/>
            <person name="Terashima Y."/>
            <person name="Suzuki O."/>
            <person name="Nakagawa S."/>
            <person name="Senoh A."/>
            <person name="Mizoguchi H."/>
            <person name="Goto Y."/>
            <person name="Shimizu F."/>
            <person name="Wakebe H."/>
            <person name="Hishigaki H."/>
            <person name="Watanabe T."/>
            <person name="Sugiyama A."/>
            <person name="Takemoto M."/>
            <person name="Kawakami B."/>
            <person name="Yamazaki M."/>
            <person name="Watanabe K."/>
            <person name="Kumagai A."/>
            <person name="Itakura S."/>
            <person name="Fukuzumi Y."/>
            <person name="Fujimori Y."/>
            <person name="Komiyama M."/>
            <person name="Tashiro H."/>
            <person name="Tanigami A."/>
            <person name="Fujiwara T."/>
            <person name="Ono T."/>
            <person name="Yamada K."/>
            <person name="Fujii Y."/>
            <person name="Ozaki K."/>
            <person name="Hirao M."/>
            <person name="Ohmori Y."/>
            <person name="Kawabata A."/>
            <person name="Hikiji T."/>
            <person name="Kobatake N."/>
            <person name="Inagaki H."/>
            <person name="Ikema Y."/>
            <person name="Okamoto S."/>
            <person name="Okitani R."/>
            <person name="Kawakami T."/>
            <person name="Noguchi S."/>
            <person name="Itoh T."/>
            <person name="Shigeta K."/>
            <person name="Senba T."/>
            <person name="Matsumura K."/>
            <person name="Nakajima Y."/>
            <person name="Mizuno T."/>
            <person name="Morinaga M."/>
            <person name="Sasaki M."/>
            <person name="Togashi T."/>
            <person name="Oyama M."/>
            <person name="Hata H."/>
            <person name="Watanabe M."/>
            <person name="Komatsu T."/>
            <person name="Mizushima-Sugano J."/>
            <person name="Satoh T."/>
            <person name="Shirai Y."/>
            <person name="Takahashi Y."/>
            <person name="Nakagawa K."/>
            <person name="Okumura K."/>
            <person name="Nagase T."/>
            <person name="Nomura N."/>
            <person name="Kikuchi H."/>
            <person name="Masuho Y."/>
            <person name="Yamashita R."/>
            <person name="Nakai K."/>
            <person name="Yada T."/>
            <person name="Nakamura Y."/>
            <person name="Ohara O."/>
            <person name="Isogai T."/>
            <person name="Sugano S."/>
        </authorList>
    </citation>
    <scope>NUCLEOTIDE SEQUENCE [LARGE SCALE MRNA] (ISOFORMS 1 AND 2)</scope>
    <source>
        <tissue>Prostate</tissue>
        <tissue>Testis</tissue>
    </source>
</reference>
<reference key="3">
    <citation type="journal article" date="2003" name="Nature">
        <title>The DNA sequence of human chromosome 7.</title>
        <authorList>
            <person name="Hillier L.W."/>
            <person name="Fulton R.S."/>
            <person name="Fulton L.A."/>
            <person name="Graves T.A."/>
            <person name="Pepin K.H."/>
            <person name="Wagner-McPherson C."/>
            <person name="Layman D."/>
            <person name="Maas J."/>
            <person name="Jaeger S."/>
            <person name="Walker R."/>
            <person name="Wylie K."/>
            <person name="Sekhon M."/>
            <person name="Becker M.C."/>
            <person name="O'Laughlin M.D."/>
            <person name="Schaller M.E."/>
            <person name="Fewell G.A."/>
            <person name="Delehaunty K.D."/>
            <person name="Miner T.L."/>
            <person name="Nash W.E."/>
            <person name="Cordes M."/>
            <person name="Du H."/>
            <person name="Sun H."/>
            <person name="Edwards J."/>
            <person name="Bradshaw-Cordum H."/>
            <person name="Ali J."/>
            <person name="Andrews S."/>
            <person name="Isak A."/>
            <person name="Vanbrunt A."/>
            <person name="Nguyen C."/>
            <person name="Du F."/>
            <person name="Lamar B."/>
            <person name="Courtney L."/>
            <person name="Kalicki J."/>
            <person name="Ozersky P."/>
            <person name="Bielicki L."/>
            <person name="Scott K."/>
            <person name="Holmes A."/>
            <person name="Harkins R."/>
            <person name="Harris A."/>
            <person name="Strong C.M."/>
            <person name="Hou S."/>
            <person name="Tomlinson C."/>
            <person name="Dauphin-Kohlberg S."/>
            <person name="Kozlowicz-Reilly A."/>
            <person name="Leonard S."/>
            <person name="Rohlfing T."/>
            <person name="Rock S.M."/>
            <person name="Tin-Wollam A.-M."/>
            <person name="Abbott A."/>
            <person name="Minx P."/>
            <person name="Maupin R."/>
            <person name="Strowmatt C."/>
            <person name="Latreille P."/>
            <person name="Miller N."/>
            <person name="Johnson D."/>
            <person name="Murray J."/>
            <person name="Woessner J.P."/>
            <person name="Wendl M.C."/>
            <person name="Yang S.-P."/>
            <person name="Schultz B.R."/>
            <person name="Wallis J.W."/>
            <person name="Spieth J."/>
            <person name="Bieri T.A."/>
            <person name="Nelson J.O."/>
            <person name="Berkowicz N."/>
            <person name="Wohldmann P.E."/>
            <person name="Cook L.L."/>
            <person name="Hickenbotham M.T."/>
            <person name="Eldred J."/>
            <person name="Williams D."/>
            <person name="Bedell J.A."/>
            <person name="Mardis E.R."/>
            <person name="Clifton S.W."/>
            <person name="Chissoe S.L."/>
            <person name="Marra M.A."/>
            <person name="Raymond C."/>
            <person name="Haugen E."/>
            <person name="Gillett W."/>
            <person name="Zhou Y."/>
            <person name="James R."/>
            <person name="Phelps K."/>
            <person name="Iadanoto S."/>
            <person name="Bubb K."/>
            <person name="Simms E."/>
            <person name="Levy R."/>
            <person name="Clendenning J."/>
            <person name="Kaul R."/>
            <person name="Kent W.J."/>
            <person name="Furey T.S."/>
            <person name="Baertsch R.A."/>
            <person name="Brent M.R."/>
            <person name="Keibler E."/>
            <person name="Flicek P."/>
            <person name="Bork P."/>
            <person name="Suyama M."/>
            <person name="Bailey J.A."/>
            <person name="Portnoy M.E."/>
            <person name="Torrents D."/>
            <person name="Chinwalla A.T."/>
            <person name="Gish W.R."/>
            <person name="Eddy S.R."/>
            <person name="McPherson J.D."/>
            <person name="Olson M.V."/>
            <person name="Eichler E.E."/>
            <person name="Green E.D."/>
            <person name="Waterston R.H."/>
            <person name="Wilson R.K."/>
        </authorList>
    </citation>
    <scope>NUCLEOTIDE SEQUENCE [LARGE SCALE GENOMIC DNA]</scope>
</reference>
<reference key="4">
    <citation type="journal article" date="2003" name="Science">
        <title>Human chromosome 7: DNA sequence and biology.</title>
        <authorList>
            <person name="Scherer S.W."/>
            <person name="Cheung J."/>
            <person name="MacDonald J.R."/>
            <person name="Osborne L.R."/>
            <person name="Nakabayashi K."/>
            <person name="Herbrick J.-A."/>
            <person name="Carson A.R."/>
            <person name="Parker-Katiraee L."/>
            <person name="Skaug J."/>
            <person name="Khaja R."/>
            <person name="Zhang J."/>
            <person name="Hudek A.K."/>
            <person name="Li M."/>
            <person name="Haddad M."/>
            <person name="Duggan G.E."/>
            <person name="Fernandez B.A."/>
            <person name="Kanematsu E."/>
            <person name="Gentles S."/>
            <person name="Christopoulos C.C."/>
            <person name="Choufani S."/>
            <person name="Kwasnicka D."/>
            <person name="Zheng X.H."/>
            <person name="Lai Z."/>
            <person name="Nusskern D.R."/>
            <person name="Zhang Q."/>
            <person name="Gu Z."/>
            <person name="Lu F."/>
            <person name="Zeesman S."/>
            <person name="Nowaczyk M.J."/>
            <person name="Teshima I."/>
            <person name="Chitayat D."/>
            <person name="Shuman C."/>
            <person name="Weksberg R."/>
            <person name="Zackai E.H."/>
            <person name="Grebe T.A."/>
            <person name="Cox S.R."/>
            <person name="Kirkpatrick S.J."/>
            <person name="Rahman N."/>
            <person name="Friedman J.M."/>
            <person name="Heng H.H.Q."/>
            <person name="Pelicci P.G."/>
            <person name="Lo-Coco F."/>
            <person name="Belloni E."/>
            <person name="Shaffer L.G."/>
            <person name="Pober B."/>
            <person name="Morton C.C."/>
            <person name="Gusella J.F."/>
            <person name="Bruns G.A.P."/>
            <person name="Korf B.R."/>
            <person name="Quade B.J."/>
            <person name="Ligon A.H."/>
            <person name="Ferguson H."/>
            <person name="Higgins A.W."/>
            <person name="Leach N.T."/>
            <person name="Herrick S.R."/>
            <person name="Lemyre E."/>
            <person name="Farra C.G."/>
            <person name="Kim H.-G."/>
            <person name="Summers A.M."/>
            <person name="Gripp K.W."/>
            <person name="Roberts W."/>
            <person name="Szatmari P."/>
            <person name="Winsor E.J.T."/>
            <person name="Grzeschik K.-H."/>
            <person name="Teebi A."/>
            <person name="Minassian B.A."/>
            <person name="Kere J."/>
            <person name="Armengol L."/>
            <person name="Pujana M.A."/>
            <person name="Estivill X."/>
            <person name="Wilson M.D."/>
            <person name="Koop B.F."/>
            <person name="Tosi S."/>
            <person name="Moore G.E."/>
            <person name="Boright A.P."/>
            <person name="Zlotorynski E."/>
            <person name="Kerem B."/>
            <person name="Kroisel P.M."/>
            <person name="Petek E."/>
            <person name="Oscier D.G."/>
            <person name="Mould S.J."/>
            <person name="Doehner H."/>
            <person name="Doehner K."/>
            <person name="Rommens J.M."/>
            <person name="Vincent J.B."/>
            <person name="Venter J.C."/>
            <person name="Li P.W."/>
            <person name="Mural R.J."/>
            <person name="Adams M.D."/>
            <person name="Tsui L.-C."/>
        </authorList>
    </citation>
    <scope>NUCLEOTIDE SEQUENCE [LARGE SCALE GENOMIC DNA]</scope>
</reference>
<reference key="5">
    <citation type="submission" date="2005-07" db="EMBL/GenBank/DDBJ databases">
        <authorList>
            <person name="Mural R.J."/>
            <person name="Istrail S."/>
            <person name="Sutton G.G."/>
            <person name="Florea L."/>
            <person name="Halpern A.L."/>
            <person name="Mobarry C.M."/>
            <person name="Lippert R."/>
            <person name="Walenz B."/>
            <person name="Shatkay H."/>
            <person name="Dew I."/>
            <person name="Miller J.R."/>
            <person name="Flanigan M.J."/>
            <person name="Edwards N.J."/>
            <person name="Bolanos R."/>
            <person name="Fasulo D."/>
            <person name="Halldorsson B.V."/>
            <person name="Hannenhalli S."/>
            <person name="Turner R."/>
            <person name="Yooseph S."/>
            <person name="Lu F."/>
            <person name="Nusskern D.R."/>
            <person name="Shue B.C."/>
            <person name="Zheng X.H."/>
            <person name="Zhong F."/>
            <person name="Delcher A.L."/>
            <person name="Huson D.H."/>
            <person name="Kravitz S.A."/>
            <person name="Mouchard L."/>
            <person name="Reinert K."/>
            <person name="Remington K.A."/>
            <person name="Clark A.G."/>
            <person name="Waterman M.S."/>
            <person name="Eichler E.E."/>
            <person name="Adams M.D."/>
            <person name="Hunkapiller M.W."/>
            <person name="Myers E.W."/>
            <person name="Venter J.C."/>
        </authorList>
    </citation>
    <scope>NUCLEOTIDE SEQUENCE [LARGE SCALE GENOMIC DNA]</scope>
</reference>
<reference key="6">
    <citation type="journal article" date="2004" name="Genome Res.">
        <title>The status, quality, and expansion of the NIH full-length cDNA project: the Mammalian Gene Collection (MGC).</title>
        <authorList>
            <consortium name="The MGC Project Team"/>
        </authorList>
    </citation>
    <scope>NUCLEOTIDE SEQUENCE [LARGE SCALE MRNA] (ISOFORM 1)</scope>
    <source>
        <tissue>Brain</tissue>
    </source>
</reference>
<organism>
    <name type="scientific">Homo sapiens</name>
    <name type="common">Human</name>
    <dbReference type="NCBI Taxonomy" id="9606"/>
    <lineage>
        <taxon>Eukaryota</taxon>
        <taxon>Metazoa</taxon>
        <taxon>Chordata</taxon>
        <taxon>Craniata</taxon>
        <taxon>Vertebrata</taxon>
        <taxon>Euteleostomi</taxon>
        <taxon>Mammalia</taxon>
        <taxon>Eutheria</taxon>
        <taxon>Euarchontoglires</taxon>
        <taxon>Primates</taxon>
        <taxon>Haplorrhini</taxon>
        <taxon>Catarrhini</taxon>
        <taxon>Hominidae</taxon>
        <taxon>Homo</taxon>
    </lineage>
</organism>